<proteinExistence type="evidence at protein level"/>
<keyword id="KW-0106">Calcium</keyword>
<keyword id="KW-0130">Cell adhesion</keyword>
<keyword id="KW-0965">Cell junction</keyword>
<keyword id="KW-1003">Cell membrane</keyword>
<keyword id="KW-0963">Cytoplasm</keyword>
<keyword id="KW-0206">Cytoskeleton</keyword>
<keyword id="KW-0217">Developmental protein</keyword>
<keyword id="KW-1015">Disulfide bond</keyword>
<keyword id="KW-0245">EGF-like domain</keyword>
<keyword id="KW-0325">Glycoprotein</keyword>
<keyword id="KW-0472">Membrane</keyword>
<keyword id="KW-0675">Receptor</keyword>
<keyword id="KW-1185">Reference proteome</keyword>
<keyword id="KW-0677">Repeat</keyword>
<keyword id="KW-0732">Signal</keyword>
<keyword id="KW-0812">Transmembrane</keyword>
<keyword id="KW-1133">Transmembrane helix</keyword>
<name>MUP4_CAEEL</name>
<feature type="signal peptide" evidence="1">
    <location>
        <begin position="1"/>
        <end position="15"/>
    </location>
</feature>
<feature type="chain" id="PRO_0000423668" description="Transmembrane matrix receptor MUP-4" evidence="1">
    <location>
        <begin position="16"/>
        <end position="2104"/>
    </location>
</feature>
<feature type="topological domain" description="Extracellular" evidence="1">
    <location>
        <begin position="16"/>
        <end position="1860"/>
    </location>
</feature>
<feature type="transmembrane region" description="Helical" evidence="1">
    <location>
        <begin position="1861"/>
        <end position="1881"/>
    </location>
</feature>
<feature type="topological domain" description="Cytoplasmic" evidence="1">
    <location>
        <begin position="1882"/>
        <end position="2104"/>
    </location>
</feature>
<feature type="domain" description="EGF-like 1" evidence="2">
    <location>
        <begin position="71"/>
        <end position="110"/>
    </location>
</feature>
<feature type="domain" description="EGF-like 2" evidence="2">
    <location>
        <begin position="122"/>
        <end position="163"/>
    </location>
</feature>
<feature type="domain" description="EGF-like 3" evidence="2">
    <location>
        <begin position="175"/>
        <end position="213"/>
    </location>
</feature>
<feature type="domain" description="WR1" evidence="1">
    <location>
        <begin position="220"/>
        <end position="265"/>
    </location>
</feature>
<feature type="domain" description="EGF-like 4" evidence="2">
    <location>
        <begin position="278"/>
        <end position="315"/>
    </location>
</feature>
<feature type="domain" description="EGF-like 5" evidence="2">
    <location>
        <begin position="327"/>
        <end position="360"/>
    </location>
</feature>
<feature type="domain" description="EGF-like 6" evidence="2">
    <location>
        <begin position="377"/>
        <end position="416"/>
    </location>
</feature>
<feature type="domain" description="VWFA" evidence="4">
    <location>
        <begin position="437"/>
        <end position="612"/>
    </location>
</feature>
<feature type="domain" description="EGF-like 7" evidence="2">
    <location>
        <begin position="728"/>
        <end position="772"/>
    </location>
</feature>
<feature type="domain" description="EGF-like 8" evidence="2">
    <location>
        <begin position="819"/>
        <end position="857"/>
    </location>
</feature>
<feature type="domain" description="EGF-like 9; calcium-binding" evidence="2">
    <location>
        <begin position="869"/>
        <end position="907"/>
    </location>
</feature>
<feature type="domain" description="EGF-like 10" evidence="2">
    <location>
        <begin position="919"/>
        <end position="958"/>
    </location>
</feature>
<feature type="domain" description="EGF-like 11" evidence="2">
    <location>
        <begin position="968"/>
        <end position="1007"/>
    </location>
</feature>
<feature type="domain" description="EGF-like 12" evidence="2">
    <location>
        <begin position="1016"/>
        <end position="1058"/>
    </location>
</feature>
<feature type="domain" description="EGF-like 13" evidence="2">
    <location>
        <begin position="1071"/>
        <end position="1110"/>
    </location>
</feature>
<feature type="domain" description="EGF-like 14" evidence="2">
    <location>
        <begin position="1121"/>
        <end position="1160"/>
    </location>
</feature>
<feature type="domain" description="EGF-like 15" evidence="2">
    <location>
        <begin position="1169"/>
        <end position="1208"/>
    </location>
</feature>
<feature type="domain" description="EGF-like 16" evidence="2">
    <location>
        <begin position="1215"/>
        <end position="1254"/>
    </location>
</feature>
<feature type="domain" description="SEA 1" evidence="3">
    <location>
        <begin position="1322"/>
        <end position="1444"/>
    </location>
</feature>
<feature type="domain" description="SEA 2" evidence="3">
    <location>
        <begin position="1495"/>
        <end position="1620"/>
    </location>
</feature>
<feature type="domain" description="EGF-like 17" evidence="2">
    <location>
        <begin position="1622"/>
        <end position="1658"/>
    </location>
</feature>
<feature type="domain" description="EGF-like 18" evidence="2">
    <location>
        <begin position="1669"/>
        <end position="1705"/>
    </location>
</feature>
<feature type="domain" description="EGF-like 19" evidence="2">
    <location>
        <begin position="1717"/>
        <end position="1754"/>
    </location>
</feature>
<feature type="domain" description="EGF-like 20; calcium-binding" evidence="2">
    <location>
        <begin position="1772"/>
        <end position="1810"/>
    </location>
</feature>
<feature type="domain" description="EGF-like 21" evidence="2">
    <location>
        <begin position="1817"/>
        <end position="1853"/>
    </location>
</feature>
<feature type="region of interest" description="Disordered" evidence="5">
    <location>
        <begin position="2031"/>
        <end position="2104"/>
    </location>
</feature>
<feature type="compositionally biased region" description="Low complexity" evidence="5">
    <location>
        <begin position="2031"/>
        <end position="2040"/>
    </location>
</feature>
<feature type="compositionally biased region" description="Basic and acidic residues" evidence="5">
    <location>
        <begin position="2062"/>
        <end position="2076"/>
    </location>
</feature>
<feature type="compositionally biased region" description="Basic and acidic residues" evidence="5">
    <location>
        <begin position="2083"/>
        <end position="2104"/>
    </location>
</feature>
<feature type="glycosylation site" description="N-linked (GlcNAc...) asparagine" evidence="1">
    <location>
        <position position="494"/>
    </location>
</feature>
<feature type="glycosylation site" description="N-linked (GlcNAc...) asparagine" evidence="1">
    <location>
        <position position="556"/>
    </location>
</feature>
<feature type="glycosylation site" description="N-linked (GlcNAc...) asparagine" evidence="1">
    <location>
        <position position="879"/>
    </location>
</feature>
<feature type="glycosylation site" description="N-linked (GlcNAc...) asparagine" evidence="1">
    <location>
        <position position="1037"/>
    </location>
</feature>
<feature type="glycosylation site" description="N-linked (GlcNAc...) asparagine" evidence="1">
    <location>
        <position position="1132"/>
    </location>
</feature>
<feature type="glycosylation site" description="N-linked (GlcNAc...) asparagine" evidence="1">
    <location>
        <position position="1271"/>
    </location>
</feature>
<feature type="glycosylation site" description="N-linked (GlcNAc...) asparagine" evidence="1">
    <location>
        <position position="1403"/>
    </location>
</feature>
<feature type="glycosylation site" description="N-linked (GlcNAc...) asparagine" evidence="1">
    <location>
        <position position="1576"/>
    </location>
</feature>
<feature type="glycosylation site" description="N-linked (GlcNAc...) asparagine" evidence="1">
    <location>
        <position position="1730"/>
    </location>
</feature>
<feature type="glycosylation site" description="N-linked (GlcNAc...) asparagine" evidence="1">
    <location>
        <position position="1782"/>
    </location>
</feature>
<feature type="glycosylation site" description="N-linked (GlcNAc...) asparagine" evidence="1">
    <location>
        <position position="1838"/>
    </location>
</feature>
<feature type="disulfide bond" evidence="2">
    <location>
        <begin position="75"/>
        <end position="89"/>
    </location>
</feature>
<feature type="disulfide bond" evidence="2">
    <location>
        <begin position="83"/>
        <end position="98"/>
    </location>
</feature>
<feature type="disulfide bond" evidence="2">
    <location>
        <begin position="126"/>
        <end position="142"/>
    </location>
</feature>
<feature type="disulfide bond" evidence="2">
    <location>
        <begin position="136"/>
        <end position="151"/>
    </location>
</feature>
<feature type="disulfide bond" evidence="2">
    <location>
        <begin position="179"/>
        <end position="192"/>
    </location>
</feature>
<feature type="disulfide bond" evidence="2">
    <location>
        <begin position="186"/>
        <end position="201"/>
    </location>
</feature>
<feature type="disulfide bond" evidence="2">
    <location>
        <begin position="282"/>
        <end position="294"/>
    </location>
</feature>
<feature type="disulfide bond" evidence="2">
    <location>
        <begin position="288"/>
        <end position="303"/>
    </location>
</feature>
<feature type="disulfide bond" evidence="2">
    <location>
        <begin position="331"/>
        <end position="344"/>
    </location>
</feature>
<feature type="disulfide bond" evidence="2">
    <location>
        <begin position="338"/>
        <end position="353"/>
    </location>
</feature>
<feature type="disulfide bond" evidence="2">
    <location>
        <begin position="355"/>
        <end position="359"/>
    </location>
</feature>
<feature type="disulfide bond" evidence="2">
    <location>
        <begin position="381"/>
        <end position="395"/>
    </location>
</feature>
<feature type="disulfide bond" evidence="2">
    <location>
        <begin position="389"/>
        <end position="404"/>
    </location>
</feature>
<feature type="disulfide bond" evidence="2">
    <location>
        <begin position="732"/>
        <end position="746"/>
    </location>
</feature>
<feature type="disulfide bond" evidence="2">
    <location>
        <begin position="740"/>
        <end position="756"/>
    </location>
</feature>
<feature type="disulfide bond" evidence="2">
    <location>
        <begin position="758"/>
        <end position="771"/>
    </location>
</feature>
<feature type="disulfide bond" evidence="2">
    <location>
        <begin position="823"/>
        <end position="836"/>
    </location>
</feature>
<feature type="disulfide bond" evidence="2">
    <location>
        <begin position="830"/>
        <end position="845"/>
    </location>
</feature>
<feature type="disulfide bond" evidence="2">
    <location>
        <begin position="873"/>
        <end position="886"/>
    </location>
</feature>
<feature type="disulfide bond" evidence="2">
    <location>
        <begin position="880"/>
        <end position="895"/>
    </location>
</feature>
<feature type="disulfide bond" evidence="2">
    <location>
        <begin position="923"/>
        <end position="937"/>
    </location>
</feature>
<feature type="disulfide bond" evidence="2">
    <location>
        <begin position="931"/>
        <end position="946"/>
    </location>
</feature>
<feature type="disulfide bond" evidence="2">
    <location>
        <begin position="972"/>
        <end position="985"/>
    </location>
</feature>
<feature type="disulfide bond" evidence="2">
    <location>
        <begin position="979"/>
        <end position="995"/>
    </location>
</feature>
<feature type="disulfide bond" evidence="2">
    <location>
        <begin position="1020"/>
        <end position="1034"/>
    </location>
</feature>
<feature type="disulfide bond" evidence="2">
    <location>
        <begin position="1028"/>
        <end position="1046"/>
    </location>
</feature>
<feature type="disulfide bond" evidence="2">
    <location>
        <begin position="1075"/>
        <end position="1089"/>
    </location>
</feature>
<feature type="disulfide bond" evidence="2">
    <location>
        <begin position="1083"/>
        <end position="1098"/>
    </location>
</feature>
<feature type="disulfide bond" evidence="2">
    <location>
        <begin position="1125"/>
        <end position="1139"/>
    </location>
</feature>
<feature type="disulfide bond" evidence="2">
    <location>
        <begin position="1133"/>
        <end position="1148"/>
    </location>
</feature>
<feature type="disulfide bond" evidence="2">
    <location>
        <begin position="1173"/>
        <end position="1187"/>
    </location>
</feature>
<feature type="disulfide bond" evidence="2">
    <location>
        <begin position="1181"/>
        <end position="1196"/>
    </location>
</feature>
<feature type="disulfide bond" evidence="2">
    <location>
        <begin position="1219"/>
        <end position="1233"/>
    </location>
</feature>
<feature type="disulfide bond" evidence="2">
    <location>
        <begin position="1227"/>
        <end position="1242"/>
    </location>
</feature>
<feature type="disulfide bond" evidence="2">
    <location>
        <begin position="1626"/>
        <end position="1637"/>
    </location>
</feature>
<feature type="disulfide bond" evidence="2">
    <location>
        <begin position="1631"/>
        <end position="1646"/>
    </location>
</feature>
<feature type="disulfide bond" evidence="2">
    <location>
        <begin position="1673"/>
        <end position="1687"/>
    </location>
</feature>
<feature type="disulfide bond" evidence="2">
    <location>
        <begin position="1681"/>
        <end position="1696"/>
    </location>
</feature>
<feature type="disulfide bond" evidence="2">
    <location>
        <begin position="1721"/>
        <end position="1733"/>
    </location>
</feature>
<feature type="disulfide bond" evidence="2">
    <location>
        <begin position="1727"/>
        <end position="1742"/>
    </location>
</feature>
<feature type="disulfide bond" evidence="2">
    <location>
        <begin position="1776"/>
        <end position="1789"/>
    </location>
</feature>
<feature type="disulfide bond" evidence="2">
    <location>
        <begin position="1783"/>
        <end position="1798"/>
    </location>
</feature>
<feature type="disulfide bond" evidence="2">
    <location>
        <begin position="1821"/>
        <end position="1830"/>
    </location>
</feature>
<feature type="disulfide bond" evidence="2">
    <location>
        <begin position="1824"/>
        <end position="1841"/>
    </location>
</feature>
<feature type="disulfide bond" evidence="2">
    <location>
        <begin position="1843"/>
        <end position="1852"/>
    </location>
</feature>
<feature type="sequence conflict" description="In Ref. 1; AAK69172." evidence="8" ref="1">
    <original>L</original>
    <variation>P</variation>
    <location>
        <position position="919"/>
    </location>
</feature>
<organism>
    <name type="scientific">Caenorhabditis elegans</name>
    <dbReference type="NCBI Taxonomy" id="6239"/>
    <lineage>
        <taxon>Eukaryota</taxon>
        <taxon>Metazoa</taxon>
        <taxon>Ecdysozoa</taxon>
        <taxon>Nematoda</taxon>
        <taxon>Chromadorea</taxon>
        <taxon>Rhabditida</taxon>
        <taxon>Rhabditina</taxon>
        <taxon>Rhabditomorpha</taxon>
        <taxon>Rhabditoidea</taxon>
        <taxon>Rhabditidae</taxon>
        <taxon>Peloderinae</taxon>
        <taxon>Caenorhabditis</taxon>
    </lineage>
</organism>
<reference evidence="8 9" key="1">
    <citation type="journal article" date="2001" name="J. Cell Biol.">
        <title>MUP-4 is a novel transmembrane protein with functions in epithelial cell adhesion in Caenorhabditis elegans.</title>
        <authorList>
            <person name="Hong L."/>
            <person name="Elbl T."/>
            <person name="Ward J."/>
            <person name="Franzini-Armstrong C."/>
            <person name="Rybicka K.K."/>
            <person name="Gatewood B.K."/>
            <person name="Baillie D.L."/>
            <person name="Bucher E.A."/>
        </authorList>
    </citation>
    <scope>NUCLEOTIDE SEQUENCE [MRNA]</scope>
    <scope>FUNCTION</scope>
    <scope>SUBCELLULAR LOCATION</scope>
    <scope>TISSUE SPECIFICITY</scope>
    <scope>DEVELOPMENTAL STAGE</scope>
    <scope>DISRUPTION PHENOTYPE</scope>
</reference>
<reference evidence="10" key="2">
    <citation type="journal article" date="1998" name="Science">
        <title>Genome sequence of the nematode C. elegans: a platform for investigating biology.</title>
        <authorList>
            <consortium name="The C. elegans sequencing consortium"/>
        </authorList>
    </citation>
    <scope>NUCLEOTIDE SEQUENCE [LARGE SCALE GENOMIC DNA]</scope>
    <source>
        <strain evidence="10">Bristol N2</strain>
    </source>
</reference>
<reference evidence="8" key="3">
    <citation type="journal article" date="1997" name="Genetics">
        <title>The mup-4 locus in Caenorhabditis elegans is essential for hypodermal integrity, organismal morphogenesis and embryonic body wall muscle position.</title>
        <authorList>
            <person name="Gatewood B.K."/>
            <person name="Bucher E.A."/>
        </authorList>
    </citation>
    <scope>FUNCTION</scope>
    <scope>DISRUPTION PHENOTYPE</scope>
</reference>
<comment type="function">
    <text evidence="6 7">Required for junctional attachments between hypodermis and muscle, and between the apical epithelial surface and the cuticular matrix. Essential for enclosure of the embryo by the hypodermis, hypodermal integrity, embryo elongation, and maintenance of hypodermal morphology in fully elongated embryos.</text>
</comment>
<comment type="subcellular location">
    <subcellularLocation>
        <location evidence="6">Cell junction</location>
        <location evidence="6">Hemidesmosome</location>
    </subcellularLocation>
    <subcellularLocation>
        <location evidence="6">Cytoplasm</location>
        <location evidence="6">Cytoskeleton</location>
    </subcellularLocation>
    <subcellularLocation>
        <location evidence="1">Cell membrane</location>
        <topology evidence="1">Single-pass membrane protein</topology>
    </subcellularLocation>
    <text evidence="1">Detected in intermediate filaments and hemidesmosomes.</text>
</comment>
<comment type="tissue specificity">
    <text evidence="6">Abundant at hypodermal cell-matrix junctions overlying muscle of threefold embryos. Expression continues in body wall muscle in larvae and adults and is also detected in other regions where cells show mechanical attachment to the hypodermis including the inner surface of the pharynx, overlying anal and intestinal muscles, overlying vulval and uterine sex muscles, male tail muscle attachment zones and the six mechanosensory neurons (at protein level).</text>
</comment>
<comment type="developmental stage">
    <text evidence="6">Expression detected in embryo, larva and adult.</text>
</comment>
<comment type="disruption phenotype">
    <text evidence="6 7">Arrested embryonic development either at bean or twofold stages with failure of hypodermis to enclose the embryo or at threefold stage with defects in hypodermal cell organization and muscle cell positioning. When disrupted in larvae, causes paralysis and displacement of muscles.</text>
</comment>
<gene>
    <name evidence="10 11" type="primary">mup-4</name>
    <name type="ORF">K07D8.1</name>
</gene>
<evidence type="ECO:0000255" key="1"/>
<evidence type="ECO:0000255" key="2">
    <source>
        <dbReference type="PROSITE-ProRule" id="PRU00076"/>
    </source>
</evidence>
<evidence type="ECO:0000255" key="3">
    <source>
        <dbReference type="PROSITE-ProRule" id="PRU00188"/>
    </source>
</evidence>
<evidence type="ECO:0000255" key="4">
    <source>
        <dbReference type="PROSITE-ProRule" id="PRU00219"/>
    </source>
</evidence>
<evidence type="ECO:0000256" key="5">
    <source>
        <dbReference type="SAM" id="MobiDB-lite"/>
    </source>
</evidence>
<evidence type="ECO:0000269" key="6">
    <source>
    </source>
</evidence>
<evidence type="ECO:0000269" key="7">
    <source>
    </source>
</evidence>
<evidence type="ECO:0000305" key="8"/>
<evidence type="ECO:0000312" key="9">
    <source>
        <dbReference type="EMBL" id="AAK69172.1"/>
    </source>
</evidence>
<evidence type="ECO:0000312" key="10">
    <source>
        <dbReference type="EMBL" id="CCD63613.1"/>
    </source>
</evidence>
<evidence type="ECO:0000312" key="11">
    <source>
        <dbReference type="WormBase" id="K07D8.1"/>
    </source>
</evidence>
<accession>Q21281</accession>
<accession>Q964N4</accession>
<protein>
    <recommendedName>
        <fullName evidence="9">Transmembrane matrix receptor MUP-4</fullName>
    </recommendedName>
    <alternativeName>
        <fullName>Muscle-positioning protein 4</fullName>
    </alternativeName>
</protein>
<dbReference type="EMBL" id="AF289202">
    <property type="protein sequence ID" value="AAK69172.1"/>
    <property type="molecule type" value="mRNA"/>
</dbReference>
<dbReference type="EMBL" id="FO080425">
    <property type="protein sequence ID" value="CCD63613.1"/>
    <property type="molecule type" value="Genomic_DNA"/>
</dbReference>
<dbReference type="RefSeq" id="NP_498645.1">
    <property type="nucleotide sequence ID" value="NM_066244.7"/>
</dbReference>
<dbReference type="SMR" id="Q21281"/>
<dbReference type="BioGRID" id="41268">
    <property type="interactions" value="13"/>
</dbReference>
<dbReference type="DIP" id="DIP-26346N"/>
<dbReference type="FunCoup" id="Q21281">
    <property type="interactions" value="42"/>
</dbReference>
<dbReference type="IntAct" id="Q21281">
    <property type="interactions" value="2"/>
</dbReference>
<dbReference type="STRING" id="6239.K07D8.1.1"/>
<dbReference type="GlyCosmos" id="Q21281">
    <property type="glycosylation" value="11 sites, No reported glycans"/>
</dbReference>
<dbReference type="PaxDb" id="6239-K07D8.1"/>
<dbReference type="PeptideAtlas" id="Q21281"/>
<dbReference type="EnsemblMetazoa" id="K07D8.1.1">
    <property type="protein sequence ID" value="K07D8.1.1"/>
    <property type="gene ID" value="WBGene00003497"/>
</dbReference>
<dbReference type="GeneID" id="176060"/>
<dbReference type="KEGG" id="cel:CELE_K07D8.1"/>
<dbReference type="UCSC" id="K07D8.1.1">
    <property type="organism name" value="c. elegans"/>
</dbReference>
<dbReference type="AGR" id="WB:WBGene00003497"/>
<dbReference type="CTD" id="176060"/>
<dbReference type="WormBase" id="K07D8.1">
    <property type="protein sequence ID" value="CE29511"/>
    <property type="gene ID" value="WBGene00003497"/>
    <property type="gene designation" value="mup-4"/>
</dbReference>
<dbReference type="eggNOG" id="KOG1217">
    <property type="taxonomic scope" value="Eukaryota"/>
</dbReference>
<dbReference type="GeneTree" id="ENSGT00940000167387"/>
<dbReference type="HOGENOM" id="CLU_000420_0_0_1"/>
<dbReference type="InParanoid" id="Q21281"/>
<dbReference type="OMA" id="CECIKPY"/>
<dbReference type="OrthoDB" id="6022609at2759"/>
<dbReference type="PhylomeDB" id="Q21281"/>
<dbReference type="PRO" id="PR:Q21281"/>
<dbReference type="Proteomes" id="UP000001940">
    <property type="component" value="Chromosome III"/>
</dbReference>
<dbReference type="Bgee" id="WBGene00003497">
    <property type="expression patterns" value="Expressed in larva and 3 other cell types or tissues"/>
</dbReference>
<dbReference type="GO" id="GO:0005737">
    <property type="term" value="C:cytoplasm"/>
    <property type="evidence" value="ECO:0007669"/>
    <property type="project" value="UniProtKB-KW"/>
</dbReference>
<dbReference type="GO" id="GO:0005856">
    <property type="term" value="C:cytoskeleton"/>
    <property type="evidence" value="ECO:0007669"/>
    <property type="project" value="UniProtKB-SubCell"/>
</dbReference>
<dbReference type="GO" id="GO:0030056">
    <property type="term" value="C:hemidesmosome"/>
    <property type="evidence" value="ECO:0000314"/>
    <property type="project" value="WormBase"/>
</dbReference>
<dbReference type="GO" id="GO:0098733">
    <property type="term" value="C:hemidesmosome associated protein complex"/>
    <property type="evidence" value="ECO:0000314"/>
    <property type="project" value="WormBase"/>
</dbReference>
<dbReference type="GO" id="GO:0005886">
    <property type="term" value="C:plasma membrane"/>
    <property type="evidence" value="ECO:0007669"/>
    <property type="project" value="UniProtKB-SubCell"/>
</dbReference>
<dbReference type="GO" id="GO:0005509">
    <property type="term" value="F:calcium ion binding"/>
    <property type="evidence" value="ECO:0007669"/>
    <property type="project" value="InterPro"/>
</dbReference>
<dbReference type="GO" id="GO:0007155">
    <property type="term" value="P:cell adhesion"/>
    <property type="evidence" value="ECO:0007669"/>
    <property type="project" value="UniProtKB-KW"/>
</dbReference>
<dbReference type="CDD" id="cd00054">
    <property type="entry name" value="EGF_CA"/>
    <property type="match status" value="6"/>
</dbReference>
<dbReference type="FunFam" id="2.10.25.10:FF:000291">
    <property type="entry name" value="Transmembrane matrix receptor MUP-4"/>
    <property type="match status" value="2"/>
</dbReference>
<dbReference type="FunFam" id="2.10.25.10:FF:000822">
    <property type="entry name" value="Transmembrane matrix receptor MUP-4"/>
    <property type="match status" value="1"/>
</dbReference>
<dbReference type="FunFam" id="3.40.50.410:FF:000047">
    <property type="entry name" value="von Willebrand factor A domain containing 2"/>
    <property type="match status" value="1"/>
</dbReference>
<dbReference type="Gene3D" id="2.10.25.10">
    <property type="entry name" value="Laminin"/>
    <property type="match status" value="17"/>
</dbReference>
<dbReference type="Gene3D" id="3.40.50.410">
    <property type="entry name" value="von Willebrand factor, type A domain"/>
    <property type="match status" value="1"/>
</dbReference>
<dbReference type="InterPro" id="IPR006150">
    <property type="entry name" value="Cys_repeat_1"/>
</dbReference>
<dbReference type="InterPro" id="IPR001881">
    <property type="entry name" value="EGF-like_Ca-bd_dom"/>
</dbReference>
<dbReference type="InterPro" id="IPR013032">
    <property type="entry name" value="EGF-like_CS"/>
</dbReference>
<dbReference type="InterPro" id="IPR000742">
    <property type="entry name" value="EGF-like_dom"/>
</dbReference>
<dbReference type="InterPro" id="IPR000152">
    <property type="entry name" value="EGF-type_Asp/Asn_hydroxyl_site"/>
</dbReference>
<dbReference type="InterPro" id="IPR018097">
    <property type="entry name" value="EGF_Ca-bd_CS"/>
</dbReference>
<dbReference type="InterPro" id="IPR024731">
    <property type="entry name" value="EGF_dom"/>
</dbReference>
<dbReference type="InterPro" id="IPR009030">
    <property type="entry name" value="Growth_fac_rcpt_cys_sf"/>
</dbReference>
<dbReference type="InterPro" id="IPR056590">
    <property type="entry name" value="Mua-3/Mup-4_EGF"/>
</dbReference>
<dbReference type="InterPro" id="IPR049883">
    <property type="entry name" value="NOTCH1_EGF-like"/>
</dbReference>
<dbReference type="InterPro" id="IPR000082">
    <property type="entry name" value="SEA_dom"/>
</dbReference>
<dbReference type="InterPro" id="IPR002035">
    <property type="entry name" value="VWF_A"/>
</dbReference>
<dbReference type="InterPro" id="IPR036465">
    <property type="entry name" value="vWFA_dom_sf"/>
</dbReference>
<dbReference type="PANTHER" id="PTHR24039:SF28">
    <property type="entry name" value="EGF-LIKE DOMAIN-CONTAINING PROTEIN"/>
    <property type="match status" value="1"/>
</dbReference>
<dbReference type="PANTHER" id="PTHR24039">
    <property type="entry name" value="FIBRILLIN-RELATED"/>
    <property type="match status" value="1"/>
</dbReference>
<dbReference type="Pfam" id="PF00008">
    <property type="entry name" value="EGF"/>
    <property type="match status" value="3"/>
</dbReference>
<dbReference type="Pfam" id="PF12947">
    <property type="entry name" value="EGF_3"/>
    <property type="match status" value="1"/>
</dbReference>
<dbReference type="Pfam" id="PF23427">
    <property type="entry name" value="EGF_4"/>
    <property type="match status" value="1"/>
</dbReference>
<dbReference type="Pfam" id="PF07645">
    <property type="entry name" value="EGF_CA"/>
    <property type="match status" value="6"/>
</dbReference>
<dbReference type="Pfam" id="PF25478">
    <property type="entry name" value="EGF_Mua-3"/>
    <property type="match status" value="1"/>
</dbReference>
<dbReference type="Pfam" id="PF12661">
    <property type="entry name" value="hEGF"/>
    <property type="match status" value="3"/>
</dbReference>
<dbReference type="Pfam" id="PF25314">
    <property type="entry name" value="TNFR_nem"/>
    <property type="match status" value="2"/>
</dbReference>
<dbReference type="Pfam" id="PF00092">
    <property type="entry name" value="VWA"/>
    <property type="match status" value="1"/>
</dbReference>
<dbReference type="PRINTS" id="PR00453">
    <property type="entry name" value="VWFADOMAIN"/>
</dbReference>
<dbReference type="SMART" id="SM00181">
    <property type="entry name" value="EGF"/>
    <property type="match status" value="27"/>
</dbReference>
<dbReference type="SMART" id="SM00179">
    <property type="entry name" value="EGF_CA"/>
    <property type="match status" value="19"/>
</dbReference>
<dbReference type="SMART" id="SM00200">
    <property type="entry name" value="SEA"/>
    <property type="match status" value="2"/>
</dbReference>
<dbReference type="SMART" id="SM00327">
    <property type="entry name" value="VWA"/>
    <property type="match status" value="1"/>
</dbReference>
<dbReference type="SMART" id="SM00289">
    <property type="entry name" value="WR1"/>
    <property type="match status" value="3"/>
</dbReference>
<dbReference type="SUPFAM" id="SSF57196">
    <property type="entry name" value="EGF/Laminin"/>
    <property type="match status" value="4"/>
</dbReference>
<dbReference type="SUPFAM" id="SSF57184">
    <property type="entry name" value="Growth factor receptor domain"/>
    <property type="match status" value="1"/>
</dbReference>
<dbReference type="SUPFAM" id="SSF53300">
    <property type="entry name" value="vWA-like"/>
    <property type="match status" value="1"/>
</dbReference>
<dbReference type="PROSITE" id="PS00010">
    <property type="entry name" value="ASX_HYDROXYL"/>
    <property type="match status" value="13"/>
</dbReference>
<dbReference type="PROSITE" id="PS00022">
    <property type="entry name" value="EGF_1"/>
    <property type="match status" value="1"/>
</dbReference>
<dbReference type="PROSITE" id="PS01186">
    <property type="entry name" value="EGF_2"/>
    <property type="match status" value="3"/>
</dbReference>
<dbReference type="PROSITE" id="PS50026">
    <property type="entry name" value="EGF_3"/>
    <property type="match status" value="21"/>
</dbReference>
<dbReference type="PROSITE" id="PS01187">
    <property type="entry name" value="EGF_CA"/>
    <property type="match status" value="2"/>
</dbReference>
<dbReference type="PROSITE" id="PS50024">
    <property type="entry name" value="SEA"/>
    <property type="match status" value="2"/>
</dbReference>
<dbReference type="PROSITE" id="PS50234">
    <property type="entry name" value="VWFA"/>
    <property type="match status" value="1"/>
</dbReference>
<sequence>MRWVPLVLLPLIASAATTYQHRQTYSSLQCRVNDPLSCNQAKSEVCVFVNGQYRCECPVGVSRLADGRCLVVNECARPSLNACHKDAQCVDLAEGYTCRCNSGFADTSPDKVNKPGRQCQKTTNECGAKQTYGVDCDENAACVDTPEGFQCVCQPGYADVSTSISKLPGRKCVESVNECTNGEADCSNNADCFDRADGYECKCRPGFVDASPNVDKYPGRVCNKPKAPEYYGQQSRQPQCSEGSGCGPNEECRFNTAGEKVCQCRRGSVQQSNGVCKVFSQCEQANECDRNAFCSNTYDGPKCQCKDGFLDVSPDPVRLPGRKCQQVRNECADGSHDCSHQAACQDTPTGYICSCNSNCIDVSSRYNLPPGRKCSVAANQCSDKSLNSCDENADCVQLPDGYTCKCFAGYVDVSSNANLPPGRVCTLSTACPAQPTDLVFLIDGSGSIGSYVFQTEVLRFLAEFTELFDIAPQKTRVSVVQYSDQIRHEFGLDNYSDRKSLQNAIRNIEYLTGLTRTGAAIEHVANEAFSERRGARPVGQVSRVAIVITDGRSQDNVTRPSDNARRQDIQLFAVGVTNHVLDAELEEISGSKDRTFHVSGFEDLNTRLRSAIQRVACPHQNNEDTYNKGPCDPSNHNGCDRSLNQVCQQKNGKFVCACPAGFDIHPVTKVCGGDICNPEIATSCPDPEICEKTPFGNWRCTCPADLGWRDRLTGVCKIGEKPVQTSESNDECSPNDVHSCPANSKCEKGAGGEFICKCDAGFQRNGRTNKCEAPGTCDPRMPDSCDARKKEKCLPDGRGAFACMCDRHHKRHPVTDICLIDECAAGVADCDPNAKCTDTDESYICTCNEGFLDKSPEQNKKPGRVCSKQRNECLDGTHNCSMNADCIDLPDGFLCRCKEDFVDISPNPNAFGGIDCRALVNECLITGGHNCHEHAICIDTRDSYKCQCKEGYVDHDELRNPGRTCKKLNQICESGKHECDKNARCVEKGANDYECVCNAGFIDKSPLTHRPGRKCVEPICSDDSKHDCHSAAICEENDSVPEKYTCKCRDGYLDVGAVMGGGKSGRECKELVNECLSASLNSCDAAATCIDLDDGYTCKCPLGSKDESPVPKLPGRSCKGLVNECNIPHLNNCSHFATCIDLEEGYECKCKPEYHDQKPEQPGTECKFIINECLAENLNDCSPNAMCIDKIDGYDCKCKAPFQDEMPSNPGRICRFDECADPKDNDCDKHALCIDTDDSYTCQCKEGFFDEISDPKKPGRVCIGLVIEPQNQSEDPTTPDPNTIKCGNGLCHLDLGEVCVGGATCSCRPGESRDNEKEKCVPTTSIPLVVRVMEYDGEPIQYRTDYSKPDTQAHIEIVDAVKKSVGKIIGKTDVAPRFVTTDVNYITNPKVQNSEWDKGLLGNVSVHLAGKEEVDKCRFYEQFAEIVREMGGRVDRIKLSDDADLDPCKKEEEKKGIPCGNTFCSIELGEECIAGKICGCPKGQKRKDANSPCRAVESWNLPLYVIRDGHEKITYSPSLSNPLNDDHKDLVSRFESGVAQSYDKTPLKGAFVTAEVNEIENPESRKKSWDTGILYNFTSHFVKGSVAEPASVFTDLIDYIQKRNDFEVGKSKLFISPEQLNPFSNCYHSDCHPDAICKEVGKGYTCTCPDGFRDLNPSRPGRNCLSYRGVNECEKPELNECSPHARCIDLDYLYKCECIRPYVNSAVGDALPGSVCSIDYCQDVNYCPLNSTCVNVDEQARCDCKPGFVDLRKSGHLSEAGLGESICRRQSDIDECALGLHNCSAAAICIDKKIGYECQCQEGYEDGNPSQPGRICAASLCGLCNGHGDCIHDALSSNVTCACLDGYTGQFCETAPSNLPLILMTLLALLFLLLTLLCCLYMCARCRCFGARGRSEGSASGQEILGSDYYTIPRAKLARPLYGDEMGDDHAGALAAYLDDGASISSDGSIEEIERRVTTDVTTREVRTTTVRDDDGNIISQSQTISHGNPHETDTEQYGMISSDHYKTSASEAMDAAMSTSASGAAYNQSSGAMMSSASGHKSAYNQGYASDSEDSDAGHAVYDRTTRTNQSHDFEPGADPRTGTERSKREFVTTTKAEEVNYF</sequence>